<accession>Q8P068</accession>
<evidence type="ECO:0000255" key="1">
    <source>
        <dbReference type="HAMAP-Rule" id="MF_02002"/>
    </source>
</evidence>
<proteinExistence type="inferred from homology"/>
<feature type="chain" id="PRO_0000098482" description="Isoleucine--tRNA ligase">
    <location>
        <begin position="1"/>
        <end position="933"/>
    </location>
</feature>
<feature type="short sequence motif" description="'HIGH' region">
    <location>
        <begin position="57"/>
        <end position="67"/>
    </location>
</feature>
<feature type="short sequence motif" description="'KMSKS' region">
    <location>
        <begin position="595"/>
        <end position="599"/>
    </location>
</feature>
<feature type="binding site" evidence="1">
    <location>
        <position position="554"/>
    </location>
    <ligand>
        <name>L-isoleucyl-5'-AMP</name>
        <dbReference type="ChEBI" id="CHEBI:178002"/>
    </ligand>
</feature>
<feature type="binding site" evidence="1">
    <location>
        <position position="598"/>
    </location>
    <ligand>
        <name>ATP</name>
        <dbReference type="ChEBI" id="CHEBI:30616"/>
    </ligand>
</feature>
<gene>
    <name evidence="1" type="primary">ileS</name>
    <name type="ordered locus">spyM18_1531</name>
</gene>
<name>SYI_STRP8</name>
<protein>
    <recommendedName>
        <fullName evidence="1">Isoleucine--tRNA ligase</fullName>
        <ecNumber evidence="1">6.1.1.5</ecNumber>
    </recommendedName>
    <alternativeName>
        <fullName evidence="1">Isoleucyl-tRNA synthetase</fullName>
        <shortName evidence="1">IleRS</shortName>
    </alternativeName>
</protein>
<organism>
    <name type="scientific">Streptococcus pyogenes serotype M18 (strain MGAS8232)</name>
    <dbReference type="NCBI Taxonomy" id="186103"/>
    <lineage>
        <taxon>Bacteria</taxon>
        <taxon>Bacillati</taxon>
        <taxon>Bacillota</taxon>
        <taxon>Bacilli</taxon>
        <taxon>Lactobacillales</taxon>
        <taxon>Streptococcaceae</taxon>
        <taxon>Streptococcus</taxon>
    </lineage>
</organism>
<keyword id="KW-0030">Aminoacyl-tRNA synthetase</keyword>
<keyword id="KW-0067">ATP-binding</keyword>
<keyword id="KW-0963">Cytoplasm</keyword>
<keyword id="KW-0436">Ligase</keyword>
<keyword id="KW-0547">Nucleotide-binding</keyword>
<keyword id="KW-0648">Protein biosynthesis</keyword>
<reference key="1">
    <citation type="journal article" date="2002" name="Proc. Natl. Acad. Sci. U.S.A.">
        <title>Genome sequence and comparative microarray analysis of serotype M18 group A Streptococcus strains associated with acute rheumatic fever outbreaks.</title>
        <authorList>
            <person name="Smoot J.C."/>
            <person name="Barbian K.D."/>
            <person name="Van Gompel J.J."/>
            <person name="Smoot L.M."/>
            <person name="Chaussee M.S."/>
            <person name="Sylva G.L."/>
            <person name="Sturdevant D.E."/>
            <person name="Ricklefs S.M."/>
            <person name="Porcella S.F."/>
            <person name="Parkins L.D."/>
            <person name="Beres S.B."/>
            <person name="Campbell D.S."/>
            <person name="Smith T.M."/>
            <person name="Zhang Q."/>
            <person name="Kapur V."/>
            <person name="Daly J.A."/>
            <person name="Veasy L.G."/>
            <person name="Musser J.M."/>
        </authorList>
    </citation>
    <scope>NUCLEOTIDE SEQUENCE [LARGE SCALE GENOMIC DNA]</scope>
    <source>
        <strain>MGAS8232</strain>
    </source>
</reference>
<dbReference type="EC" id="6.1.1.5" evidence="1"/>
<dbReference type="EMBL" id="AE009949">
    <property type="protein sequence ID" value="AAL98099.1"/>
    <property type="molecule type" value="Genomic_DNA"/>
</dbReference>
<dbReference type="RefSeq" id="WP_011018002.1">
    <property type="nucleotide sequence ID" value="NC_003485.1"/>
</dbReference>
<dbReference type="SMR" id="Q8P068"/>
<dbReference type="KEGG" id="spm:spyM18_1531"/>
<dbReference type="HOGENOM" id="CLU_001493_7_1_9"/>
<dbReference type="GO" id="GO:0005829">
    <property type="term" value="C:cytosol"/>
    <property type="evidence" value="ECO:0007669"/>
    <property type="project" value="TreeGrafter"/>
</dbReference>
<dbReference type="GO" id="GO:0002161">
    <property type="term" value="F:aminoacyl-tRNA deacylase activity"/>
    <property type="evidence" value="ECO:0007669"/>
    <property type="project" value="InterPro"/>
</dbReference>
<dbReference type="GO" id="GO:0005524">
    <property type="term" value="F:ATP binding"/>
    <property type="evidence" value="ECO:0007669"/>
    <property type="project" value="UniProtKB-UniRule"/>
</dbReference>
<dbReference type="GO" id="GO:0004822">
    <property type="term" value="F:isoleucine-tRNA ligase activity"/>
    <property type="evidence" value="ECO:0007669"/>
    <property type="project" value="UniProtKB-UniRule"/>
</dbReference>
<dbReference type="GO" id="GO:0000049">
    <property type="term" value="F:tRNA binding"/>
    <property type="evidence" value="ECO:0007669"/>
    <property type="project" value="InterPro"/>
</dbReference>
<dbReference type="GO" id="GO:0006428">
    <property type="term" value="P:isoleucyl-tRNA aminoacylation"/>
    <property type="evidence" value="ECO:0007669"/>
    <property type="project" value="UniProtKB-UniRule"/>
</dbReference>
<dbReference type="CDD" id="cd07960">
    <property type="entry name" value="Anticodon_Ia_Ile_BEm"/>
    <property type="match status" value="1"/>
</dbReference>
<dbReference type="CDD" id="cd00818">
    <property type="entry name" value="IleRS_core"/>
    <property type="match status" value="1"/>
</dbReference>
<dbReference type="FunFam" id="1.10.10.830:FF:000001">
    <property type="entry name" value="Isoleucine--tRNA ligase"/>
    <property type="match status" value="1"/>
</dbReference>
<dbReference type="FunFam" id="1.10.730.20:FF:000001">
    <property type="entry name" value="Isoleucine--tRNA ligase"/>
    <property type="match status" value="1"/>
</dbReference>
<dbReference type="FunFam" id="3.40.50.620:FF:000092">
    <property type="entry name" value="Isoleucine--tRNA ligase"/>
    <property type="match status" value="1"/>
</dbReference>
<dbReference type="FunFam" id="3.90.740.10:FF:000006">
    <property type="entry name" value="Isoleucine--tRNA ligase"/>
    <property type="match status" value="1"/>
</dbReference>
<dbReference type="Gene3D" id="1.10.730.20">
    <property type="match status" value="1"/>
</dbReference>
<dbReference type="Gene3D" id="3.40.50.620">
    <property type="entry name" value="HUPs"/>
    <property type="match status" value="2"/>
</dbReference>
<dbReference type="Gene3D" id="1.10.10.830">
    <property type="entry name" value="Ile-tRNA synthetase CP2 domain-like"/>
    <property type="match status" value="1"/>
</dbReference>
<dbReference type="HAMAP" id="MF_02002">
    <property type="entry name" value="Ile_tRNA_synth_type1"/>
    <property type="match status" value="1"/>
</dbReference>
<dbReference type="InterPro" id="IPR001412">
    <property type="entry name" value="aa-tRNA-synth_I_CS"/>
</dbReference>
<dbReference type="InterPro" id="IPR002300">
    <property type="entry name" value="aa-tRNA-synth_Ia"/>
</dbReference>
<dbReference type="InterPro" id="IPR033708">
    <property type="entry name" value="Anticodon_Ile_BEm"/>
</dbReference>
<dbReference type="InterPro" id="IPR002301">
    <property type="entry name" value="Ile-tRNA-ligase"/>
</dbReference>
<dbReference type="InterPro" id="IPR023585">
    <property type="entry name" value="Ile-tRNA-ligase_type1"/>
</dbReference>
<dbReference type="InterPro" id="IPR050081">
    <property type="entry name" value="Ile-tRNA_ligase"/>
</dbReference>
<dbReference type="InterPro" id="IPR013155">
    <property type="entry name" value="M/V/L/I-tRNA-synth_anticd-bd"/>
</dbReference>
<dbReference type="InterPro" id="IPR014729">
    <property type="entry name" value="Rossmann-like_a/b/a_fold"/>
</dbReference>
<dbReference type="InterPro" id="IPR009080">
    <property type="entry name" value="tRNAsynth_Ia_anticodon-bd"/>
</dbReference>
<dbReference type="InterPro" id="IPR009008">
    <property type="entry name" value="Val/Leu/Ile-tRNA-synth_edit"/>
</dbReference>
<dbReference type="NCBIfam" id="TIGR00392">
    <property type="entry name" value="ileS"/>
    <property type="match status" value="1"/>
</dbReference>
<dbReference type="PANTHER" id="PTHR42765:SF1">
    <property type="entry name" value="ISOLEUCINE--TRNA LIGASE, MITOCHONDRIAL"/>
    <property type="match status" value="1"/>
</dbReference>
<dbReference type="PANTHER" id="PTHR42765">
    <property type="entry name" value="SOLEUCYL-TRNA SYNTHETASE"/>
    <property type="match status" value="1"/>
</dbReference>
<dbReference type="Pfam" id="PF08264">
    <property type="entry name" value="Anticodon_1"/>
    <property type="match status" value="1"/>
</dbReference>
<dbReference type="Pfam" id="PF00133">
    <property type="entry name" value="tRNA-synt_1"/>
    <property type="match status" value="1"/>
</dbReference>
<dbReference type="PRINTS" id="PR00984">
    <property type="entry name" value="TRNASYNTHILE"/>
</dbReference>
<dbReference type="SUPFAM" id="SSF47323">
    <property type="entry name" value="Anticodon-binding domain of a subclass of class I aminoacyl-tRNA synthetases"/>
    <property type="match status" value="1"/>
</dbReference>
<dbReference type="SUPFAM" id="SSF52374">
    <property type="entry name" value="Nucleotidylyl transferase"/>
    <property type="match status" value="1"/>
</dbReference>
<dbReference type="SUPFAM" id="SSF50677">
    <property type="entry name" value="ValRS/IleRS/LeuRS editing domain"/>
    <property type="match status" value="1"/>
</dbReference>
<dbReference type="PROSITE" id="PS00178">
    <property type="entry name" value="AA_TRNA_LIGASE_I"/>
    <property type="match status" value="1"/>
</dbReference>
<comment type="function">
    <text evidence="1">Catalyzes the attachment of isoleucine to tRNA(Ile). As IleRS can inadvertently accommodate and process structurally similar amino acids such as valine, to avoid such errors it has two additional distinct tRNA(Ile)-dependent editing activities. One activity is designated as 'pretransfer' editing and involves the hydrolysis of activated Val-AMP. The other activity is designated 'posttransfer' editing and involves deacylation of mischarged Val-tRNA(Ile).</text>
</comment>
<comment type="catalytic activity">
    <reaction evidence="1">
        <text>tRNA(Ile) + L-isoleucine + ATP = L-isoleucyl-tRNA(Ile) + AMP + diphosphate</text>
        <dbReference type="Rhea" id="RHEA:11060"/>
        <dbReference type="Rhea" id="RHEA-COMP:9666"/>
        <dbReference type="Rhea" id="RHEA-COMP:9695"/>
        <dbReference type="ChEBI" id="CHEBI:30616"/>
        <dbReference type="ChEBI" id="CHEBI:33019"/>
        <dbReference type="ChEBI" id="CHEBI:58045"/>
        <dbReference type="ChEBI" id="CHEBI:78442"/>
        <dbReference type="ChEBI" id="CHEBI:78528"/>
        <dbReference type="ChEBI" id="CHEBI:456215"/>
        <dbReference type="EC" id="6.1.1.5"/>
    </reaction>
</comment>
<comment type="subunit">
    <text evidence="1">Monomer.</text>
</comment>
<comment type="subcellular location">
    <subcellularLocation>
        <location evidence="1">Cytoplasm</location>
    </subcellularLocation>
</comment>
<comment type="domain">
    <text evidence="1">IleRS has two distinct active sites: one for aminoacylation and one for editing. The misactivated valine is translocated from the active site to the editing site, which sterically excludes the correctly activated isoleucine. The single editing site contains two valyl binding pockets, one specific for each substrate (Val-AMP or Val-tRNA(Ile)).</text>
</comment>
<comment type="similarity">
    <text evidence="1">Belongs to the class-I aminoacyl-tRNA synthetase family. IleS type 1 subfamily.</text>
</comment>
<sequence>MKLKETLNLGKTAFPMRADLPNKEPQWQAAWEQAELYKKRQELNAGKPAFHLHDGPPYANGNIHVGHALNKISKDIIVRSKSMSGFQAPYVPGWDTHGLPIEQVLAKQGIKRKEMDLAEYLEMCRQYALSQVDKQRDDFKRLGVSADWENPYVTLDPQFEADQIRVFGAMAEKGYIYRGAKPVYWSWSSESALAEAEIEYHDIDSTSLYYANKVKDGKGILDTNTYIVVWTTTPFTVTASRGLTVGPDMDYLVVKPAGSDRQYVVAEGLLDSLAGKFGWESFETLASHKGADLEYIVTEHPWDTDVEELVILGDHVTLESGTGIVHTAPGFGEDDYNVGTKYKLEVAVTVDERGLMMENAGPDFHGQFYNKVTPIVIDKLGDLLLAQEVINHSYPFDWRTKKPIIWRAVPQWFASVSDFRQDILDEIEKTTFHPSWGETRLYNMIRDRGDWVISRQRAWGVPLSIFYAEDGTAIMTKEVTDHVADLFQENGSIIWWQKEAKDLLPEGFTHPGSPNGEFTKETDIMDVWFDSGSSWNGVMNARENLSYPADLYLEGSDQYRGWFNSSLITSVAVNGHAPYKAILSQGFVLDGKGEKMSKSKGNIISPNDVAKQYGADILRLWVASVDTDNDVRVSMEILGQVSETYRKIRNTLRFLIANTSDFNPATDTVAYADLGAVDKYMTIVFNQLVATITDAYERYDFMAIYKAVVNFVTVDLSAFYLDFAKDVVYIEAANSLERRRMQTVFYDILVKITKLLTPILPHTTEEIWSYLEYESEAFVQLAEMPVAETFSAQEDILEAWSAFMTLRTQAQKALEEARNAKIIGKSLEAHLTIYASEEVKTLLTALDSDIALLLIVSQLTIADLADAPADAVAFEGIAFMVEHAIGEVCERSRRIDPTTRMRSYNAFVCDHSAKIIEENFPEAVAEGFEESGK</sequence>